<gene>
    <name evidence="1" type="primary">esxC</name>
    <name type="ordered locus">MAP_0161</name>
</gene>
<name>ESXC_MYCPA</name>
<keyword id="KW-1185">Reference proteome</keyword>
<keyword id="KW-0964">Secreted</keyword>
<evidence type="ECO:0000250" key="1">
    <source>
        <dbReference type="UniProtKB" id="P9WNI1"/>
    </source>
</evidence>
<evidence type="ECO:0000305" key="2"/>
<organism>
    <name type="scientific">Mycolicibacterium paratuberculosis (strain ATCC BAA-968 / K-10)</name>
    <name type="common">Mycobacterium paratuberculosis</name>
    <dbReference type="NCBI Taxonomy" id="262316"/>
    <lineage>
        <taxon>Bacteria</taxon>
        <taxon>Bacillati</taxon>
        <taxon>Actinomycetota</taxon>
        <taxon>Actinomycetes</taxon>
        <taxon>Mycobacteriales</taxon>
        <taxon>Mycobacteriaceae</taxon>
        <taxon>Mycobacterium</taxon>
        <taxon>Mycobacterium avium complex (MAC)</taxon>
    </lineage>
</organism>
<reference key="1">
    <citation type="submission" date="1999-11" db="EMBL/GenBank/DDBJ databases">
        <title>Study of IS900 loci in Mycobacterium avium subsp. paratuberculosis by multiplex PCR screening, shows homologous recombination around IS900 insertions.</title>
        <authorList>
            <person name="Bull T.J."/>
            <person name="Hermon-Taylor J."/>
            <person name="Pavlik I."/>
            <person name="El-Zaatari F."/>
            <person name="Tizard M."/>
        </authorList>
    </citation>
    <scope>NUCLEOTIDE SEQUENCE [GENOMIC DNA]</scope>
</reference>
<reference key="2">
    <citation type="journal article" date="2005" name="Proc. Natl. Acad. Sci. U.S.A.">
        <title>The complete genome sequence of Mycobacterium avium subspecies paratuberculosis.</title>
        <authorList>
            <person name="Li L."/>
            <person name="Bannantine J.P."/>
            <person name="Zhang Q."/>
            <person name="Amonsin A."/>
            <person name="May B.J."/>
            <person name="Alt D."/>
            <person name="Banerji N."/>
            <person name="Kanjilal S."/>
            <person name="Kapur V."/>
        </authorList>
    </citation>
    <scope>NUCLEOTIDE SEQUENCE [LARGE SCALE GENOMIC DNA]</scope>
    <source>
        <strain>ATCC BAA-968 / K-10</strain>
    </source>
</reference>
<proteinExistence type="inferred from homology"/>
<accession>Q9K548</accession>
<comment type="subcellular location">
    <subcellularLocation>
        <location evidence="1">Secreted</location>
    </subcellularLocation>
    <text evidence="1">Probably secreted via the ESX-2 / type VII secretion system (T7SS).</text>
</comment>
<comment type="similarity">
    <text evidence="2">Belongs to the WXG100 family. ESAT-6 subfamily.</text>
</comment>
<sequence>MSDPITYNPGAVADFATDVASRAGQLQSIFDDTSNRTHALQEFFAGHGASGFFEAQAQMLSGLQGLIDTIRQHGQTTSHVLDSAISTDQHIAGLF</sequence>
<dbReference type="EMBL" id="AJ250015">
    <property type="protein sequence ID" value="CAB96047.1"/>
    <property type="molecule type" value="Genomic_DNA"/>
</dbReference>
<dbReference type="EMBL" id="AE016958">
    <property type="protein sequence ID" value="AAS02478.1"/>
    <property type="molecule type" value="Genomic_DNA"/>
</dbReference>
<dbReference type="RefSeq" id="WP_003876587.1">
    <property type="nucleotide sequence ID" value="NZ_CP106873.1"/>
</dbReference>
<dbReference type="SMR" id="Q9K548"/>
<dbReference type="STRING" id="262316.MAP_0161"/>
<dbReference type="KEGG" id="mpa:MAP_0161"/>
<dbReference type="eggNOG" id="ENOG50329MM">
    <property type="taxonomic scope" value="Bacteria"/>
</dbReference>
<dbReference type="HOGENOM" id="CLU_183730_0_0_11"/>
<dbReference type="Proteomes" id="UP000000580">
    <property type="component" value="Chromosome"/>
</dbReference>
<dbReference type="GO" id="GO:0005576">
    <property type="term" value="C:extracellular region"/>
    <property type="evidence" value="ECO:0007669"/>
    <property type="project" value="UniProtKB-SubCell"/>
</dbReference>
<dbReference type="Gene3D" id="1.10.287.1060">
    <property type="entry name" value="ESAT-6-like"/>
    <property type="match status" value="1"/>
</dbReference>
<dbReference type="InterPro" id="IPR036689">
    <property type="entry name" value="ESAT-6-like_sf"/>
</dbReference>
<dbReference type="InterPro" id="IPR010310">
    <property type="entry name" value="T7SS_ESAT-6-like"/>
</dbReference>
<dbReference type="Pfam" id="PF06013">
    <property type="entry name" value="WXG100"/>
    <property type="match status" value="1"/>
</dbReference>
<dbReference type="SUPFAM" id="SSF140453">
    <property type="entry name" value="EsxAB dimer-like"/>
    <property type="match status" value="1"/>
</dbReference>
<feature type="chain" id="PRO_0000167817" description="ESAT-6-like protein EsxC">
    <location>
        <begin position="1"/>
        <end position="95"/>
    </location>
</feature>
<protein>
    <recommendedName>
        <fullName evidence="1">ESAT-6-like protein EsxC</fullName>
    </recommendedName>
    <alternativeName>
        <fullName>ORF3890c</fullName>
    </alternativeName>
</protein>